<accession>Q9WUJ3</accession>
<protein>
    <recommendedName>
        <fullName>Myomegalin</fullName>
    </recommendedName>
    <alternativeName>
        <fullName>Phosphodiesterase 4D-interacting protein</fullName>
    </alternativeName>
    <alternativeName>
        <fullName>Phosphodiesterase-binding protein clone 46</fullName>
    </alternativeName>
</protein>
<proteinExistence type="evidence at protein level"/>
<sequence>MSNGYRTLSQHLNDLKKENFSLKLRIYFLEERMQQKYEVSREDVYKRNIELKVEVESLKRELQDRKQHLHKTWADEEDLNSQNEAELRRQVEEPQQETEHVYELLDNNIQLLQEESRFAKDEATQMETLVEAEKGCNLELSERWKDATKNREDAPGDQVKLDQYSAALAQRDRRIEELRQSLAAQEGLVEQLSREKQQLLHLLEEPGGMEVQPMPKGLPTQQKPDLNETPTTQPSVSDSHLAELQDKIQQTEVTNKILQEKLNDMSCELRSAQESSQKQDTTIQSLKEMLKSRESETEELYQVIEGQNDTMAKLPEMLHQSQLGQLQSSEGIAPAQQQVALLDLQSALFCSQLEIQKLQRLLRQKERQLADGKRCMQFVEAAAQEREQQKEAAWKHNQELRKALQHLQGELHSKSQQLHVLEAEKYNEIRTQGQNIQHLSHSLSHKEQLIQELQELLQYRDTTDKTLDTNEVFLEKLRQRIQDRAVALERVIDEKFSALEEKDKELRQLRLAVRDRDHDLERLRCVLSANEATMQSMESLLRARGLEVEQLIATCQNLQWLKEELETKFGHWQKEQESIIQQLQTSLHDRNKEVEDLSATLLHKLGPGQSEVAEELCQRLQRKERVLQDLLSDRNKQAMEHEMEVQGLLQSMGTREQERQAVAEKMVQAFMERNSELQALRQYLGGKELMAASQAFISNQPAGATSVGPHHGEQTDQGSTQMPSRDDSTSLTAREEASIPRSTLGDSDTVAGLEKELSNAKEELELMAKKERESQIELSALQSMMAVQEEELQVQAADLESLTRNIQIKEDLIKDLQMQLVDPEDMPAMERLTQEVLLLREKVASVEPQGQEGSENRRQQLLLMLEGLVDERSRLNEALQAERQLYSSLVKFHAQPETFERDRTLQVELEGAQVLRSRLEEVLGRSLERLSRLETLAAIGGATAGDETEDTSTQFTDSIEEEAAHNSHQQLIKVSLEKSLTTMETQNTCLQPPSPVGEDGNRHLQEEMLHLRAEIHQPLEEKRKAEAELKELKAQIEEAGFSSVSHIRNTMLSLCLENAELKEQMGEAMSDGWEVEEDKEKGEVMVETVVAKGGLSEDSLQAEFRKVQGRLKSAYNIINLLKEQLVLRSSEGNTKEMPEFLVRLAREVDRMNMGLPSSEKHQHQEQENMTARPGPRPQSLKLGTALSVDGYQLENKSQAQDSGHQPEFSLPGSTKHLRSQLAQCRQRYQDLQEKLLISEATVFAQANQLEKYRAILSESLVKQDSKQIQVDLQDLGYETCGRSENEAEREETTSPECEEHGNLKPVVLVEGLCSEQGYLDPVLVSSPVKNPWRTSQEARGVQAQGTSDDSSLLRKDIRDLKAQLQNAYKVIQNLRSRVRSLSATSDYSSSLERPRKLRAVATLEGASPHSVTDEDEGLLSDGTGAFYPPGLQAKKNLENLIQRVSQLEAQLPKTGLEGKLAEELKSASWPGKYDSLIQDQARKTVISASENTKREKDLFSSHPTFERYVKSFEDLLRNNDLTTYLGQSFREQLSSRRSVTDRLTSKFSTKDHKSEKEEAGLEPLALRLSRELQEKEKVIEVLQAKLDTRFSSPPSSHAASDSHRSASSTSFLSDDIEACSDMDVASEYTHYEEKKPSPSNSAASASQGLKGEPRSSSISLPTPQNPPKEASQAQPGFHFNSIPKPASLSQAPMHFTVPSFMPFGPSGPPLLGCCETPVVSLAEAQQELQMLQKQLGRSVSIAPPTSTSTLLSNHTEASSPRYSNPAQPHSPARGTIELGRILEPGYLGSGQWDMMRPQKGSISGELSSGSSMYQLNSKPTGADLLEEHLGEIRNLRQRLEESICVNDRLREQLQHRLSSTARENGSTSHFYSQGLESMPQLYNENRALREENQSLQTRLSHASRGHSQEVDHLREALLSSSSQLQELEKELEQQKAERRQLLEDLQEKQDEIVHFREERLSLQENNSRLQHKLALLQQQCEEKQQLSLSLQSELQIYESLYENPKKGLKAFSLDSCYQVPGELSCLVAEIRALRVQLEQSIQVNNRLRLQLEQQMDHGAGKASLSSCPVNQSFSAKAELANQQPPFQGSAASPPVRDVGLNSPPVVLPSNSCSVPGSDSAIISRTNNGSDESAATKTPPKMEVDAADGPFASGHGRHVIGHVDDYDALQQQIGEGKLLIQKILSLTRPARSVPALDAQGTEAPGTKSVHELRSSARALNHSLEESASLLTMFWRAALPNSHGSVLVGEEGNLMEKELLDLRAQVSQQQQLLQSTAVRLKTANQRKKSMEQFIVSHLTRTHDVLKKARTNLEMKSFRALMCTPAL</sequence>
<reference key="1">
    <citation type="journal article" date="2001" name="J. Biol. Chem.">
        <title>Myomegalin is a novel protein of the Golgi/centrosome that interacts with a cyclic nucleotide phosphodiesterase.</title>
        <authorList>
            <person name="Verde I."/>
            <person name="Pahlke G."/>
            <person name="Salanova M."/>
            <person name="Zhang G."/>
            <person name="Wang S."/>
            <person name="Coletti D."/>
            <person name="Onuffer J."/>
            <person name="Jin S.-L.C."/>
            <person name="Conti M."/>
        </authorList>
    </citation>
    <scope>NUCLEOTIDE SEQUENCE [MRNA]</scope>
    <scope>FUNCTION</scope>
    <scope>INTERACTION WITH PDE4D</scope>
    <scope>SUBCELLULAR LOCATION</scope>
    <scope>TISSUE SPECIFICITY</scope>
    <source>
        <strain>Sprague-Dawley</strain>
        <tissue>Skeletal muscle</tissue>
    </source>
</reference>
<evidence type="ECO:0000250" key="1">
    <source>
        <dbReference type="UniProtKB" id="Q5VU43"/>
    </source>
</evidence>
<evidence type="ECO:0000255" key="2"/>
<evidence type="ECO:0000255" key="3">
    <source>
        <dbReference type="PROSITE-ProRule" id="PRU00647"/>
    </source>
</evidence>
<evidence type="ECO:0000256" key="4">
    <source>
        <dbReference type="SAM" id="MobiDB-lite"/>
    </source>
</evidence>
<evidence type="ECO:0000269" key="5">
    <source>
    </source>
</evidence>
<organism>
    <name type="scientific">Rattus norvegicus</name>
    <name type="common">Rat</name>
    <dbReference type="NCBI Taxonomy" id="10116"/>
    <lineage>
        <taxon>Eukaryota</taxon>
        <taxon>Metazoa</taxon>
        <taxon>Chordata</taxon>
        <taxon>Craniata</taxon>
        <taxon>Vertebrata</taxon>
        <taxon>Euteleostomi</taxon>
        <taxon>Mammalia</taxon>
        <taxon>Eutheria</taxon>
        <taxon>Euarchontoglires</taxon>
        <taxon>Glires</taxon>
        <taxon>Rodentia</taxon>
        <taxon>Myomorpha</taxon>
        <taxon>Muroidea</taxon>
        <taxon>Muridae</taxon>
        <taxon>Murinae</taxon>
        <taxon>Rattus</taxon>
    </lineage>
</organism>
<gene>
    <name type="primary">Pde4dip</name>
    <name type="synonym">Pbp46</name>
</gene>
<name>MYOME_RAT</name>
<feature type="chain" id="PRO_0000307692" description="Myomegalin">
    <location>
        <begin position="1"/>
        <end position="2324"/>
    </location>
</feature>
<feature type="domain" description="Olduvai" evidence="3">
    <location>
        <begin position="1550"/>
        <end position="1641"/>
    </location>
</feature>
<feature type="region of interest" description="Disordered" evidence="4">
    <location>
        <begin position="72"/>
        <end position="96"/>
    </location>
</feature>
<feature type="region of interest" description="Disordered" evidence="4">
    <location>
        <begin position="205"/>
        <end position="240"/>
    </location>
</feature>
<feature type="region of interest" description="Disordered" evidence="4">
    <location>
        <begin position="701"/>
        <end position="747"/>
    </location>
</feature>
<feature type="region of interest" description="Disordered" evidence="4">
    <location>
        <begin position="1155"/>
        <end position="1182"/>
    </location>
</feature>
<feature type="region of interest" description="Disordered" evidence="4">
    <location>
        <begin position="1195"/>
        <end position="1216"/>
    </location>
</feature>
<feature type="region of interest" description="Disordered" evidence="4">
    <location>
        <begin position="1540"/>
        <end position="1559"/>
    </location>
</feature>
<feature type="region of interest" description="Disordered" evidence="4">
    <location>
        <begin position="1589"/>
        <end position="1610"/>
    </location>
</feature>
<feature type="region of interest" description="Disordered" evidence="4">
    <location>
        <begin position="1628"/>
        <end position="1685"/>
    </location>
</feature>
<feature type="region of interest" description="Disordered" evidence="4">
    <location>
        <begin position="1742"/>
        <end position="1773"/>
    </location>
</feature>
<feature type="region of interest" description="Disordered" evidence="4">
    <location>
        <begin position="1857"/>
        <end position="1877"/>
    </location>
</feature>
<feature type="region of interest" description="Disordered" evidence="4">
    <location>
        <begin position="2081"/>
        <end position="2140"/>
    </location>
</feature>
<feature type="coiled-coil region" evidence="2">
    <location>
        <begin position="41"/>
        <end position="132"/>
    </location>
</feature>
<feature type="coiled-coil region" evidence="2">
    <location>
        <begin position="158"/>
        <end position="205"/>
    </location>
</feature>
<feature type="coiled-coil region" evidence="2">
    <location>
        <begin position="238"/>
        <end position="288"/>
    </location>
</feature>
<feature type="coiled-coil region" evidence="2">
    <location>
        <begin position="348"/>
        <end position="638"/>
    </location>
</feature>
<feature type="coiled-coil region" evidence="2">
    <location>
        <begin position="745"/>
        <end position="822"/>
    </location>
</feature>
<feature type="coiled-coil region" evidence="2">
    <location>
        <begin position="855"/>
        <end position="923"/>
    </location>
</feature>
<feature type="coiled-coil region" evidence="2">
    <location>
        <begin position="1011"/>
        <end position="1043"/>
    </location>
</feature>
<feature type="coiled-coil region" evidence="2">
    <location>
        <begin position="1213"/>
        <end position="1241"/>
    </location>
</feature>
<feature type="coiled-coil region" evidence="2">
    <location>
        <begin position="1346"/>
        <end position="1384"/>
    </location>
</feature>
<feature type="coiled-coil region" evidence="2">
    <location>
        <begin position="1430"/>
        <end position="1455"/>
    </location>
</feature>
<feature type="coiled-coil region" evidence="2">
    <location>
        <begin position="1821"/>
        <end position="2056"/>
    </location>
</feature>
<feature type="coiled-coil region" evidence="2">
    <location>
        <begin position="2248"/>
        <end position="2274"/>
    </location>
</feature>
<feature type="compositionally biased region" description="Basic and acidic residues" evidence="4">
    <location>
        <begin position="85"/>
        <end position="96"/>
    </location>
</feature>
<feature type="compositionally biased region" description="Polar residues" evidence="4">
    <location>
        <begin position="219"/>
        <end position="238"/>
    </location>
</feature>
<feature type="compositionally biased region" description="Basic and acidic residues" evidence="4">
    <location>
        <begin position="724"/>
        <end position="738"/>
    </location>
</feature>
<feature type="compositionally biased region" description="Low complexity" evidence="4">
    <location>
        <begin position="1591"/>
        <end position="1610"/>
    </location>
</feature>
<feature type="compositionally biased region" description="Low complexity" evidence="4">
    <location>
        <begin position="1637"/>
        <end position="1646"/>
    </location>
</feature>
<feature type="compositionally biased region" description="Polar residues" evidence="4">
    <location>
        <begin position="1743"/>
        <end position="1767"/>
    </location>
</feature>
<feature type="compositionally biased region" description="Polar residues" evidence="4">
    <location>
        <begin position="2081"/>
        <end position="2090"/>
    </location>
</feature>
<feature type="compositionally biased region" description="Polar residues" evidence="4">
    <location>
        <begin position="2108"/>
        <end position="2135"/>
    </location>
</feature>
<feature type="modified residue" description="Phosphothreonine" evidence="1">
    <location>
        <position position="705"/>
    </location>
</feature>
<comment type="function">
    <text evidence="1 5">Functions as an anchor sequestering components of the cAMP-dependent pathway to Golgi and/or centrosomes (PubMed:11134006). May participate in microtubule dynamics, promoting microtubule assembly, in an isoform-specific manner. Depending upon the cell context, may act at the level of the Golgi apparatus or that of the centrosome. In complex with AKAP9, recruits CAMSAP2 to the Golgi apparatus and tethers non-centrosomal minus-end microtubules to the Golgi, an important step for polarized cell movement. In complex with AKAP9, EB1/MAPRE1 and CDK5RAP2, contributes to microtubules nucleation and extension from the centrosome to the cell periphery, a crucial process for directed cell migration, mitotic spindle orientation and cell-cycle progression (By similarity).</text>
</comment>
<comment type="subunit">
    <text evidence="1 5">Interacts with PDE4D (PubMed:11134006). May interact with MAPRE1 and MAPRE3. May form a pericentrosomal complex with AKAP9, CDK5RAP2 and EB1/MAPRE1 in an isoform-specific manner; within this complex, may mediate MAPRE1-binding to CDK5RAP2. Interaction with AKAP9 stabilizes both proteins. May interact with CAMSAP2 in an isoform-specific manner; this interaction is much stronger in the presence of AKAP9. In complex with AKAP9, recruits CAMSAP2 to the Golgi apparatus. May interact with unglycosylated LGALS3BP in an isoform-specific manner; this interaction may connect the pericentrosomal complex to the gamma-tubulin ring complex (gamma-TuRC) to promote microtubule assembly and acetylation (By similarity).</text>
</comment>
<comment type="subcellular location">
    <subcellularLocation>
        <location evidence="5">Cytoplasm</location>
        <location evidence="5">Cytoskeleton</location>
        <location evidence="5">Microtubule organizing center</location>
        <location evidence="5">Centrosome</location>
    </subcellularLocation>
    <subcellularLocation>
        <location evidence="1">Cytoplasm</location>
        <location evidence="1">Cytoskeleton</location>
    </subcellularLocation>
    <subcellularLocation>
        <location evidence="5">Golgi apparatus</location>
    </subcellularLocation>
    <text evidence="1">Associated with the microtubule network at the growing distal tip of microtubules. Targeting to the Golgi apparatus requires AKAP9.</text>
</comment>
<comment type="tissue specificity">
    <text evidence="5">Abundantly expressed in heart and skeletal muscle and to a lower extent in brain, lung and liver. Expressed in heart, skeletal muscle and testis (at protein level).</text>
</comment>
<keyword id="KW-0175">Coiled coil</keyword>
<keyword id="KW-0963">Cytoplasm</keyword>
<keyword id="KW-0206">Cytoskeleton</keyword>
<keyword id="KW-0333">Golgi apparatus</keyword>
<keyword id="KW-0597">Phosphoprotein</keyword>
<keyword id="KW-1185">Reference proteome</keyword>
<dbReference type="EMBL" id="AF139185">
    <property type="protein sequence ID" value="AAD29427.1"/>
    <property type="molecule type" value="mRNA"/>
</dbReference>
<dbReference type="RefSeq" id="NP_071777.1">
    <property type="nucleotide sequence ID" value="NM_022382.1"/>
</dbReference>
<dbReference type="SMR" id="Q9WUJ3"/>
<dbReference type="BioGRID" id="248991">
    <property type="interactions" value="1"/>
</dbReference>
<dbReference type="FunCoup" id="Q9WUJ3">
    <property type="interactions" value="412"/>
</dbReference>
<dbReference type="IntAct" id="Q9WUJ3">
    <property type="interactions" value="1"/>
</dbReference>
<dbReference type="STRING" id="10116.ENSRNOP00000072921"/>
<dbReference type="iPTMnet" id="Q9WUJ3"/>
<dbReference type="PhosphoSitePlus" id="Q9WUJ3"/>
<dbReference type="PaxDb" id="10116-ENSRNOP00000024900"/>
<dbReference type="GeneID" id="64183"/>
<dbReference type="KEGG" id="rno:64183"/>
<dbReference type="UCSC" id="RGD:708410">
    <property type="organism name" value="rat"/>
</dbReference>
<dbReference type="AGR" id="RGD:708410"/>
<dbReference type="CTD" id="9659"/>
<dbReference type="RGD" id="708410">
    <property type="gene designation" value="Pde4dip"/>
</dbReference>
<dbReference type="eggNOG" id="ENOG502QPV2">
    <property type="taxonomic scope" value="Eukaryota"/>
</dbReference>
<dbReference type="InParanoid" id="Q9WUJ3"/>
<dbReference type="PhylomeDB" id="Q9WUJ3"/>
<dbReference type="PRO" id="PR:Q9WUJ3"/>
<dbReference type="Proteomes" id="UP000002494">
    <property type="component" value="Unplaced"/>
</dbReference>
<dbReference type="GO" id="GO:0005813">
    <property type="term" value="C:centrosome"/>
    <property type="evidence" value="ECO:0000314"/>
    <property type="project" value="RGD"/>
</dbReference>
<dbReference type="GO" id="GO:0005737">
    <property type="term" value="C:cytoplasm"/>
    <property type="evidence" value="ECO:0000266"/>
    <property type="project" value="RGD"/>
</dbReference>
<dbReference type="GO" id="GO:0005794">
    <property type="term" value="C:Golgi apparatus"/>
    <property type="evidence" value="ECO:0000266"/>
    <property type="project" value="RGD"/>
</dbReference>
<dbReference type="GO" id="GO:0030016">
    <property type="term" value="C:myofibril"/>
    <property type="evidence" value="ECO:0000314"/>
    <property type="project" value="RGD"/>
</dbReference>
<dbReference type="GO" id="GO:0005634">
    <property type="term" value="C:nucleus"/>
    <property type="evidence" value="ECO:0000250"/>
    <property type="project" value="UniProtKB"/>
</dbReference>
<dbReference type="GO" id="GO:0019899">
    <property type="term" value="F:enzyme binding"/>
    <property type="evidence" value="ECO:0000353"/>
    <property type="project" value="RGD"/>
</dbReference>
<dbReference type="GO" id="GO:0060090">
    <property type="term" value="F:molecular adaptor activity"/>
    <property type="evidence" value="ECO:0000250"/>
    <property type="project" value="UniProtKB"/>
</dbReference>
<dbReference type="GO" id="GO:0007098">
    <property type="term" value="P:centrosome cycle"/>
    <property type="evidence" value="ECO:0000318"/>
    <property type="project" value="GO_Central"/>
</dbReference>
<dbReference type="GO" id="GO:0065003">
    <property type="term" value="P:protein-containing complex assembly"/>
    <property type="evidence" value="ECO:0000314"/>
    <property type="project" value="RGD"/>
</dbReference>
<dbReference type="GO" id="GO:1903358">
    <property type="term" value="P:regulation of Golgi organization"/>
    <property type="evidence" value="ECO:0000250"/>
    <property type="project" value="UniProtKB"/>
</dbReference>
<dbReference type="InterPro" id="IPR056273">
    <property type="entry name" value="CC_CDK5RAP2_MYOME"/>
</dbReference>
<dbReference type="InterPro" id="IPR012943">
    <property type="entry name" value="Cnn_1N"/>
</dbReference>
<dbReference type="InterPro" id="IPR052593">
    <property type="entry name" value="MT-associated_AKAP9-binding"/>
</dbReference>
<dbReference type="InterPro" id="IPR010630">
    <property type="entry name" value="Olduvai_dom"/>
</dbReference>
<dbReference type="PANTHER" id="PTHR46501">
    <property type="entry name" value="MYOMEGALIN"/>
    <property type="match status" value="1"/>
</dbReference>
<dbReference type="PANTHER" id="PTHR46501:SF2">
    <property type="entry name" value="MYOMEGALIN"/>
    <property type="match status" value="1"/>
</dbReference>
<dbReference type="Pfam" id="PF23246">
    <property type="entry name" value="CC_CDK5RAP2"/>
    <property type="match status" value="1"/>
</dbReference>
<dbReference type="Pfam" id="PF07989">
    <property type="entry name" value="Cnn_1N"/>
    <property type="match status" value="1"/>
</dbReference>
<dbReference type="SMART" id="SM01148">
    <property type="entry name" value="DUF1220"/>
    <property type="match status" value="1"/>
</dbReference>
<dbReference type="PROSITE" id="PS51316">
    <property type="entry name" value="ODV"/>
    <property type="match status" value="1"/>
</dbReference>